<proteinExistence type="inferred from homology"/>
<feature type="chain" id="PRO_0000097477" description="Regulator of sigma D">
    <location>
        <begin position="1"/>
        <end position="158"/>
    </location>
</feature>
<keyword id="KW-0963">Cytoplasm</keyword>
<keyword id="KW-1185">Reference proteome</keyword>
<keyword id="KW-0804">Transcription</keyword>
<keyword id="KW-0805">Transcription regulation</keyword>
<organism>
    <name type="scientific">Escherichia coli O157:H7</name>
    <dbReference type="NCBI Taxonomy" id="83334"/>
    <lineage>
        <taxon>Bacteria</taxon>
        <taxon>Pseudomonadati</taxon>
        <taxon>Pseudomonadota</taxon>
        <taxon>Gammaproteobacteria</taxon>
        <taxon>Enterobacterales</taxon>
        <taxon>Enterobacteriaceae</taxon>
        <taxon>Escherichia</taxon>
    </lineage>
</organism>
<dbReference type="EMBL" id="AE005174">
    <property type="protein sequence ID" value="AAG59192.1"/>
    <property type="molecule type" value="Genomic_DNA"/>
</dbReference>
<dbReference type="EMBL" id="BA000007">
    <property type="protein sequence ID" value="BAB38341.1"/>
    <property type="molecule type" value="Genomic_DNA"/>
</dbReference>
<dbReference type="PIR" id="F91243">
    <property type="entry name" value="F91243"/>
</dbReference>
<dbReference type="RefSeq" id="NP_312945.1">
    <property type="nucleotide sequence ID" value="NC_002695.1"/>
</dbReference>
<dbReference type="RefSeq" id="WP_000934302.1">
    <property type="nucleotide sequence ID" value="NZ_VOAI01000037.1"/>
</dbReference>
<dbReference type="SMR" id="P0AFX5"/>
<dbReference type="STRING" id="155864.Z5570"/>
<dbReference type="GeneID" id="75205513"/>
<dbReference type="GeneID" id="914938"/>
<dbReference type="KEGG" id="ece:Z5570"/>
<dbReference type="KEGG" id="ecs:ECs_4918"/>
<dbReference type="PATRIC" id="fig|386585.9.peg.5143"/>
<dbReference type="eggNOG" id="COG3160">
    <property type="taxonomic scope" value="Bacteria"/>
</dbReference>
<dbReference type="HOGENOM" id="CLU_142729_0_0_6"/>
<dbReference type="OMA" id="DVIDHWL"/>
<dbReference type="Proteomes" id="UP000000558">
    <property type="component" value="Chromosome"/>
</dbReference>
<dbReference type="Proteomes" id="UP000002519">
    <property type="component" value="Chromosome"/>
</dbReference>
<dbReference type="GO" id="GO:0005737">
    <property type="term" value="C:cytoplasm"/>
    <property type="evidence" value="ECO:0007669"/>
    <property type="project" value="UniProtKB-SubCell"/>
</dbReference>
<dbReference type="GO" id="GO:0006355">
    <property type="term" value="P:regulation of DNA-templated transcription"/>
    <property type="evidence" value="ECO:0007669"/>
    <property type="project" value="InterPro"/>
</dbReference>
<dbReference type="FunFam" id="1.20.120.1370:FF:000001">
    <property type="entry name" value="Regulator of sigma D"/>
    <property type="match status" value="1"/>
</dbReference>
<dbReference type="Gene3D" id="1.20.120.1370">
    <property type="entry name" value="Regulator of RNA polymerase sigma(70) subunit, domain 4"/>
    <property type="match status" value="1"/>
</dbReference>
<dbReference type="HAMAP" id="MF_01181">
    <property type="entry name" value="Rsd"/>
    <property type="match status" value="1"/>
</dbReference>
<dbReference type="InterPro" id="IPR038309">
    <property type="entry name" value="Rsd/AlgQ_sf"/>
</dbReference>
<dbReference type="InterPro" id="IPR023785">
    <property type="entry name" value="Sigma70_reg_Rsd"/>
</dbReference>
<dbReference type="InterPro" id="IPR007448">
    <property type="entry name" value="Sigma70_reg_Rsd_AlgQ"/>
</dbReference>
<dbReference type="NCBIfam" id="NF008723">
    <property type="entry name" value="PRK11718.1"/>
    <property type="match status" value="1"/>
</dbReference>
<dbReference type="Pfam" id="PF04353">
    <property type="entry name" value="Rsd_AlgQ"/>
    <property type="match status" value="1"/>
</dbReference>
<dbReference type="PIRSF" id="PIRSF016548">
    <property type="entry name" value="Rsd_AlgQ"/>
    <property type="match status" value="1"/>
</dbReference>
<gene>
    <name evidence="1" type="primary">rsd</name>
    <name type="ordered locus">Z5570</name>
    <name type="ordered locus">ECs4918</name>
</gene>
<accession>P0AFX5</accession>
<accession>P31690</accession>
<protein>
    <recommendedName>
        <fullName evidence="1">Regulator of sigma D</fullName>
    </recommendedName>
</protein>
<comment type="function">
    <text evidence="1">Binds RpoD and negatively regulates RpoD-mediated transcription activation by preventing the interaction between the primary sigma factor RpoD with the catalytic core of the RNA polymerase and with promoter DNA. May be involved in replacement of the RNA polymerase sigma subunit from RpoD to RpoS during the transition from exponential growth to the stationary phase.</text>
</comment>
<comment type="subunit">
    <text evidence="1">Interacts with RpoD.</text>
</comment>
<comment type="subcellular location">
    <subcellularLocation>
        <location evidence="1">Cytoplasm</location>
    </subcellularLocation>
</comment>
<comment type="similarity">
    <text evidence="1">Belongs to the Rsd/AlgQ family.</text>
</comment>
<sequence>MLNQLDNLTERVRGSNKLVDRWLHVRKHLLVAYYNLVGIKPGKESYMRLNEKALDDFCQSLVDYLSAGHFSIYERILHKLEGNGQLARAAKIWPQLEANTQQIMDYYDSSLETAIDHDNYLEFQQVLSDIGEALEARFVLEDKLILLVLDAARVKHPA</sequence>
<reference key="1">
    <citation type="journal article" date="2001" name="Nature">
        <title>Genome sequence of enterohaemorrhagic Escherichia coli O157:H7.</title>
        <authorList>
            <person name="Perna N.T."/>
            <person name="Plunkett G. III"/>
            <person name="Burland V."/>
            <person name="Mau B."/>
            <person name="Glasner J.D."/>
            <person name="Rose D.J."/>
            <person name="Mayhew G.F."/>
            <person name="Evans P.S."/>
            <person name="Gregor J."/>
            <person name="Kirkpatrick H.A."/>
            <person name="Posfai G."/>
            <person name="Hackett J."/>
            <person name="Klink S."/>
            <person name="Boutin A."/>
            <person name="Shao Y."/>
            <person name="Miller L."/>
            <person name="Grotbeck E.J."/>
            <person name="Davis N.W."/>
            <person name="Lim A."/>
            <person name="Dimalanta E.T."/>
            <person name="Potamousis K."/>
            <person name="Apodaca J."/>
            <person name="Anantharaman T.S."/>
            <person name="Lin J."/>
            <person name="Yen G."/>
            <person name="Schwartz D.C."/>
            <person name="Welch R.A."/>
            <person name="Blattner F.R."/>
        </authorList>
    </citation>
    <scope>NUCLEOTIDE SEQUENCE [LARGE SCALE GENOMIC DNA]</scope>
    <source>
        <strain>O157:H7 / EDL933 / ATCC 700927 / EHEC</strain>
    </source>
</reference>
<reference key="2">
    <citation type="journal article" date="2001" name="DNA Res.">
        <title>Complete genome sequence of enterohemorrhagic Escherichia coli O157:H7 and genomic comparison with a laboratory strain K-12.</title>
        <authorList>
            <person name="Hayashi T."/>
            <person name="Makino K."/>
            <person name="Ohnishi M."/>
            <person name="Kurokawa K."/>
            <person name="Ishii K."/>
            <person name="Yokoyama K."/>
            <person name="Han C.-G."/>
            <person name="Ohtsubo E."/>
            <person name="Nakayama K."/>
            <person name="Murata T."/>
            <person name="Tanaka M."/>
            <person name="Tobe T."/>
            <person name="Iida T."/>
            <person name="Takami H."/>
            <person name="Honda T."/>
            <person name="Sasakawa C."/>
            <person name="Ogasawara N."/>
            <person name="Yasunaga T."/>
            <person name="Kuhara S."/>
            <person name="Shiba T."/>
            <person name="Hattori M."/>
            <person name="Shinagawa H."/>
        </authorList>
    </citation>
    <scope>NUCLEOTIDE SEQUENCE [LARGE SCALE GENOMIC DNA]</scope>
    <source>
        <strain>O157:H7 / Sakai / RIMD 0509952 / EHEC</strain>
    </source>
</reference>
<name>RSD_ECO57</name>
<evidence type="ECO:0000255" key="1">
    <source>
        <dbReference type="HAMAP-Rule" id="MF_01181"/>
    </source>
</evidence>